<accession>Q5FWU8</accession>
<keyword id="KW-1003">Cell membrane</keyword>
<keyword id="KW-0966">Cell projection</keyword>
<keyword id="KW-0969">Cilium</keyword>
<keyword id="KW-0963">Cytoplasm</keyword>
<keyword id="KW-0206">Cytoskeleton</keyword>
<keyword id="KW-0472">Membrane</keyword>
<keyword id="KW-0479">Metal-binding</keyword>
<keyword id="KW-1185">Reference proteome</keyword>
<keyword id="KW-0862">Zinc</keyword>
<keyword id="KW-0863">Zinc-finger</keyword>
<evidence type="ECO:0000250" key="1"/>
<evidence type="ECO:0000250" key="2">
    <source>
        <dbReference type="UniProtKB" id="Q6AXZ5"/>
    </source>
</evidence>
<evidence type="ECO:0000250" key="3">
    <source>
        <dbReference type="UniProtKB" id="Q99ML0"/>
    </source>
</evidence>
<evidence type="ECO:0000255" key="4">
    <source>
        <dbReference type="PROSITE-ProRule" id="PRU00134"/>
    </source>
</evidence>
<evidence type="ECO:0000269" key="5">
    <source>
    </source>
</evidence>
<evidence type="ECO:0000269" key="6">
    <source>
    </source>
</evidence>
<evidence type="ECO:0000269" key="7">
    <source>
    </source>
</evidence>
<evidence type="ECO:0000305" key="8"/>
<proteinExistence type="evidence at transcript level"/>
<feature type="chain" id="PRO_0000424817" description="Zinc finger MYND domain-containing protein 10">
    <location>
        <begin position="1"/>
        <end position="439"/>
    </location>
</feature>
<feature type="zinc finger region" description="MYND-type" evidence="4">
    <location>
        <begin position="385"/>
        <end position="421"/>
    </location>
</feature>
<feature type="binding site" evidence="4">
    <location>
        <position position="385"/>
    </location>
    <ligand>
        <name>Zn(2+)</name>
        <dbReference type="ChEBI" id="CHEBI:29105"/>
        <label>1</label>
    </ligand>
</feature>
<feature type="binding site" evidence="4">
    <location>
        <position position="388"/>
    </location>
    <ligand>
        <name>Zn(2+)</name>
        <dbReference type="ChEBI" id="CHEBI:29105"/>
        <label>1</label>
    </ligand>
</feature>
<feature type="binding site" evidence="4">
    <location>
        <position position="396"/>
    </location>
    <ligand>
        <name>Zn(2+)</name>
        <dbReference type="ChEBI" id="CHEBI:29105"/>
        <label>2</label>
    </ligand>
</feature>
<feature type="binding site" evidence="4">
    <location>
        <position position="399"/>
    </location>
    <ligand>
        <name>Zn(2+)</name>
        <dbReference type="ChEBI" id="CHEBI:29105"/>
        <label>2</label>
    </ligand>
</feature>
<feature type="binding site" evidence="4">
    <location>
        <position position="405"/>
    </location>
    <ligand>
        <name>Zn(2+)</name>
        <dbReference type="ChEBI" id="CHEBI:29105"/>
        <label>1</label>
    </ligand>
</feature>
<feature type="binding site" evidence="4">
    <location>
        <position position="409"/>
    </location>
    <ligand>
        <name>Zn(2+)</name>
        <dbReference type="ChEBI" id="CHEBI:29105"/>
        <label>1</label>
    </ligand>
</feature>
<feature type="binding site" evidence="4">
    <location>
        <position position="417"/>
    </location>
    <ligand>
        <name>Zn(2+)</name>
        <dbReference type="ChEBI" id="CHEBI:29105"/>
        <label>2</label>
    </ligand>
</feature>
<feature type="binding site" evidence="4">
    <location>
        <position position="421"/>
    </location>
    <ligand>
        <name>Zn(2+)</name>
        <dbReference type="ChEBI" id="CHEBI:29105"/>
        <label>2</label>
    </ligand>
</feature>
<gene>
    <name type="primary">zmynd10</name>
</gene>
<protein>
    <recommendedName>
        <fullName>Zinc finger MYND domain-containing protein 10</fullName>
    </recommendedName>
</protein>
<organism>
    <name type="scientific">Xenopus laevis</name>
    <name type="common">African clawed frog</name>
    <dbReference type="NCBI Taxonomy" id="8355"/>
    <lineage>
        <taxon>Eukaryota</taxon>
        <taxon>Metazoa</taxon>
        <taxon>Chordata</taxon>
        <taxon>Craniata</taxon>
        <taxon>Vertebrata</taxon>
        <taxon>Euteleostomi</taxon>
        <taxon>Amphibia</taxon>
        <taxon>Batrachia</taxon>
        <taxon>Anura</taxon>
        <taxon>Pipoidea</taxon>
        <taxon>Pipidae</taxon>
        <taxon>Xenopodinae</taxon>
        <taxon>Xenopus</taxon>
        <taxon>Xenopus</taxon>
    </lineage>
</organism>
<comment type="function">
    <text evidence="3">Plays a role in axonemal structure organization and motility. Involved in axonemal pre-assembly of inner and outer dynein arms (IDA and ODA, respectively) for proper axoneme building for cilia motility (By similarity). May act by indirectly regulating transcription of dynein proteins (By similarity).</text>
</comment>
<comment type="subunit">
    <text evidence="1">Interacts with LRRC6.</text>
</comment>
<comment type="subcellular location">
    <subcellularLocation>
        <location evidence="5">Cytoplasm</location>
    </subcellularLocation>
    <subcellularLocation>
        <location evidence="5">Cytoplasm</location>
        <location evidence="5">Cytoskeleton</location>
        <location evidence="5">Cilium basal body</location>
    </subcellularLocation>
    <subcellularLocation>
        <location evidence="2">Cytoplasm</location>
        <location evidence="2">Cytoskeleton</location>
        <location evidence="2">Microtubule organizing center</location>
        <location evidence="2">Centrosome</location>
        <location evidence="2">Centriolar satellite</location>
    </subcellularLocation>
    <subcellularLocation>
        <location evidence="3">Apical cell membrane</location>
    </subcellularLocation>
    <subcellularLocation>
        <location evidence="6 7">Dynein axonemal particle</location>
    </subcellularLocation>
    <text>Localizes both to the basal body and the striated rootlet, an appendage that projects away from the basal body into the cytoplasm.</text>
</comment>
<comment type="disruption phenotype">
    <text evidence="5">Ciliopathy phenotypes. Although a large percentage of cells fail to generate cilia because of a substantial defect in ciliogenesis, the numbers of centrioles is apparently normal.</text>
</comment>
<comment type="similarity">
    <text evidence="8">Belongs to the ZMYND10 family.</text>
</comment>
<sequence>MVQSLQTFSVRDIASGGWFKQHEYIEKLNMQAILNASAGQEEMIKDLLVTHGKIPTLIHELISVEIWKLKVFHVLCQLQDFQPKSTFPLYMVIHHEATIINLLETIFFHKEVCESAEDLTLDLIDYCYRKLTLLASQSSDRRTLSQNRLLPHTANEASSLEELKQQAEALEFDIALKCLSVTRYISDHIDSLPLSVMNRLLNTHNLPCLLVELLHQSPWTQSEKGQLQKYESGRWYPVPAEDQLKMTKLDGQAWIALYNLLLRPECQQKYNINSFTKGQLLKLRSFLTEVLLDQLPNLVDLQRFLSHLSVSEPTPPKKELILEQVPEVWDSIINENSGKWKAIAKYQVKQAFSPSEEDLRSQAKRWAQTYNMDVMEALVPEKPKCGSCGSEASKRCSRCQSEWYCKRECQVKHWQKHKKACDMVSEAMKNMQEEIQKEA</sequence>
<name>ZMY10_XENLA</name>
<dbReference type="EMBL" id="BC089198">
    <property type="protein sequence ID" value="AAH89198.1"/>
    <property type="molecule type" value="mRNA"/>
</dbReference>
<dbReference type="RefSeq" id="NP_001090272.2">
    <property type="nucleotide sequence ID" value="NM_001096803.1"/>
</dbReference>
<dbReference type="SMR" id="Q5FWU8"/>
<dbReference type="DNASU" id="779178"/>
<dbReference type="GeneID" id="779178"/>
<dbReference type="KEGG" id="xla:779178"/>
<dbReference type="AGR" id="Xenbase:XB-GENE-961073"/>
<dbReference type="CTD" id="779178"/>
<dbReference type="Xenbase" id="XB-GENE-961073">
    <property type="gene designation" value="zmynd10.L"/>
</dbReference>
<dbReference type="OrthoDB" id="432970at2759"/>
<dbReference type="Proteomes" id="UP000186698">
    <property type="component" value="Chromosome 4L"/>
</dbReference>
<dbReference type="Bgee" id="779178">
    <property type="expression patterns" value="Expressed in testis and 15 other cell types or tissues"/>
</dbReference>
<dbReference type="GO" id="GO:0016324">
    <property type="term" value="C:apical plasma membrane"/>
    <property type="evidence" value="ECO:0000250"/>
    <property type="project" value="UniProtKB"/>
</dbReference>
<dbReference type="GO" id="GO:0034451">
    <property type="term" value="C:centriolar satellite"/>
    <property type="evidence" value="ECO:0000250"/>
    <property type="project" value="UniProtKB"/>
</dbReference>
<dbReference type="GO" id="GO:0005929">
    <property type="term" value="C:cilium"/>
    <property type="evidence" value="ECO:0007669"/>
    <property type="project" value="UniProtKB-KW"/>
</dbReference>
<dbReference type="GO" id="GO:0005737">
    <property type="term" value="C:cytoplasm"/>
    <property type="evidence" value="ECO:0000318"/>
    <property type="project" value="GO_Central"/>
</dbReference>
<dbReference type="GO" id="GO:0120293">
    <property type="term" value="C:dynein axonemal particle"/>
    <property type="evidence" value="ECO:0000314"/>
    <property type="project" value="UniProtKB"/>
</dbReference>
<dbReference type="GO" id="GO:0008270">
    <property type="term" value="F:zinc ion binding"/>
    <property type="evidence" value="ECO:0007669"/>
    <property type="project" value="UniProtKB-KW"/>
</dbReference>
<dbReference type="GO" id="GO:0036159">
    <property type="term" value="P:inner dynein arm assembly"/>
    <property type="evidence" value="ECO:0000250"/>
    <property type="project" value="UniProtKB"/>
</dbReference>
<dbReference type="GO" id="GO:0044458">
    <property type="term" value="P:motile cilium assembly"/>
    <property type="evidence" value="ECO:0000250"/>
    <property type="project" value="UniProtKB"/>
</dbReference>
<dbReference type="GO" id="GO:0036158">
    <property type="term" value="P:outer dynein arm assembly"/>
    <property type="evidence" value="ECO:0000250"/>
    <property type="project" value="UniProtKB"/>
</dbReference>
<dbReference type="GO" id="GO:1905505">
    <property type="term" value="P:positive regulation of motile cilium assembly"/>
    <property type="evidence" value="ECO:0000250"/>
    <property type="project" value="UniProtKB"/>
</dbReference>
<dbReference type="FunFam" id="6.10.140.2220:FF:000009">
    <property type="entry name" value="Zinc finger MYND domain-containing protein 10"/>
    <property type="match status" value="1"/>
</dbReference>
<dbReference type="Gene3D" id="6.10.140.2220">
    <property type="match status" value="1"/>
</dbReference>
<dbReference type="InterPro" id="IPR017333">
    <property type="entry name" value="UCP037948_Znf-MYND"/>
</dbReference>
<dbReference type="InterPro" id="IPR052298">
    <property type="entry name" value="ZMYND10"/>
</dbReference>
<dbReference type="InterPro" id="IPR002893">
    <property type="entry name" value="Znf_MYND"/>
</dbReference>
<dbReference type="PANTHER" id="PTHR13244">
    <property type="entry name" value="ZINC FINGER MYND DOMAIN CONTAINING PROTEIN 10"/>
    <property type="match status" value="1"/>
</dbReference>
<dbReference type="PANTHER" id="PTHR13244:SF7">
    <property type="entry name" value="ZINC FINGER MYND DOMAIN-CONTAINING PROTEIN 10"/>
    <property type="match status" value="1"/>
</dbReference>
<dbReference type="Pfam" id="PF01753">
    <property type="entry name" value="zf-MYND"/>
    <property type="match status" value="1"/>
</dbReference>
<dbReference type="PIRSF" id="PIRSF037948">
    <property type="entry name" value="UCP037948_Znf_MYND10"/>
    <property type="match status" value="1"/>
</dbReference>
<dbReference type="SUPFAM" id="SSF144232">
    <property type="entry name" value="HIT/MYND zinc finger-like"/>
    <property type="match status" value="1"/>
</dbReference>
<dbReference type="PROSITE" id="PS01360">
    <property type="entry name" value="ZF_MYND_1"/>
    <property type="match status" value="1"/>
</dbReference>
<dbReference type="PROSITE" id="PS50865">
    <property type="entry name" value="ZF_MYND_2"/>
    <property type="match status" value="1"/>
</dbReference>
<reference key="1">
    <citation type="submission" date="2005-01" db="EMBL/GenBank/DDBJ databases">
        <authorList>
            <consortium name="NIH - Xenopus Gene Collection (XGC) project"/>
        </authorList>
    </citation>
    <scope>NUCLEOTIDE SEQUENCE [LARGE SCALE MRNA]</scope>
    <source>
        <tissue>Embryo</tissue>
    </source>
</reference>
<reference key="2">
    <citation type="journal article" date="2013" name="Am. J. Hum. Genet.">
        <title>ZMYND10 is mutated in primary ciliary dyskinesia and interacts with LRRC6.</title>
        <authorList>
            <person name="Zariwala M.A."/>
            <person name="Gee H.Y."/>
            <person name="Kurkowiak M."/>
            <person name="Al-Mutairi D.A."/>
            <person name="Leigh M.W."/>
            <person name="Hurd T.W."/>
            <person name="Hjeij R."/>
            <person name="Dell S.D."/>
            <person name="Chaki M."/>
            <person name="Dougherty G.W."/>
            <person name="Adan M."/>
            <person name="Spear P.C."/>
            <person name="Esteve-Rudd J."/>
            <person name="Loges N.T."/>
            <person name="Rosenfeld M."/>
            <person name="Diaz K.A."/>
            <person name="Olbrich H."/>
            <person name="Wolf W.E."/>
            <person name="Sheridan E."/>
            <person name="Batten T.F."/>
            <person name="Halbritter J."/>
            <person name="Porath J.D."/>
            <person name="Kohl S."/>
            <person name="Lovric S."/>
            <person name="Hwang D.Y."/>
            <person name="Pittman J.E."/>
            <person name="Burns K.A."/>
            <person name="Ferkol T.W."/>
            <person name="Sagel S.D."/>
            <person name="Olivier K.N."/>
            <person name="Morgan L.C."/>
            <person name="Werner C."/>
            <person name="Raidt J."/>
            <person name="Pennekamp P."/>
            <person name="Sun Z."/>
            <person name="Zhou W."/>
            <person name="Airik R."/>
            <person name="Natarajan S."/>
            <person name="Allen S.J."/>
            <person name="Amirav I."/>
            <person name="Wieczorek D."/>
            <person name="Landwehr K."/>
            <person name="Nielsen K."/>
            <person name="Schwerk N."/>
            <person name="Sertic J."/>
            <person name="Kohler G."/>
            <person name="Washburn J."/>
            <person name="Levy S."/>
            <person name="Fan S."/>
            <person name="Koerner-Rettberg C."/>
            <person name="Amselem S."/>
            <person name="Williams D.S."/>
            <person name="Mitchell B.J."/>
            <person name="Drummond I.A."/>
            <person name="Otto E.A."/>
            <person name="Omran H."/>
            <person name="Knowles M.R."/>
            <person name="Hildebrandt F."/>
        </authorList>
    </citation>
    <scope>DISRUPTION PHENOTYPE</scope>
    <scope>SUBCELLULAR LOCATION</scope>
</reference>
<reference key="3">
    <citation type="journal article" date="2018" name="Elife">
        <title>A liquid-like organelle at the root of motile ciliopathy.</title>
        <authorList>
            <person name="Huizar R.L."/>
            <person name="Lee C."/>
            <person name="Boulgakov A.A."/>
            <person name="Horani A."/>
            <person name="Tu F."/>
            <person name="Marcotte E.M."/>
            <person name="Brody S.L."/>
            <person name="Wallingford J.B."/>
        </authorList>
    </citation>
    <scope>SUBCELLULAR LOCATION</scope>
</reference>
<reference key="4">
    <citation type="journal article" date="2020" name="Elife">
        <title>Functional partitioning of a liquid-like organelle during assembly of axonemal dyneins.</title>
        <authorList>
            <person name="Lee C."/>
            <person name="Cox R.M."/>
            <person name="Papoulas O."/>
            <person name="Horani A."/>
            <person name="Drew K."/>
            <person name="Devitt C.C."/>
            <person name="Brody S.L."/>
            <person name="Marcotte E.M."/>
            <person name="Wallingford J.B."/>
        </authorList>
    </citation>
    <scope>SUBCELLULAR LOCATION</scope>
</reference>